<comment type="similarity">
    <text evidence="1">Belongs to the bacterial ribosomal protein bL28 family.</text>
</comment>
<reference key="1">
    <citation type="submission" date="2007-09" db="EMBL/GenBank/DDBJ databases">
        <title>Complete genome sequence of Rickettsia canadensis.</title>
        <authorList>
            <person name="Madan A."/>
            <person name="Fahey J."/>
            <person name="Helton E."/>
            <person name="Ketteman M."/>
            <person name="Madan A."/>
            <person name="Rodrigues S."/>
            <person name="Sanchez A."/>
            <person name="Whiting M."/>
            <person name="Dasch G."/>
            <person name="Eremeeva M."/>
        </authorList>
    </citation>
    <scope>NUCLEOTIDE SEQUENCE [LARGE SCALE GENOMIC DNA]</scope>
    <source>
        <strain>McKiel</strain>
    </source>
</reference>
<evidence type="ECO:0000255" key="1">
    <source>
        <dbReference type="HAMAP-Rule" id="MF_00373"/>
    </source>
</evidence>
<evidence type="ECO:0000305" key="2"/>
<accession>A8EXG2</accession>
<proteinExistence type="inferred from homology"/>
<feature type="chain" id="PRO_1000007338" description="Large ribosomal subunit protein bL28">
    <location>
        <begin position="1"/>
        <end position="97"/>
    </location>
</feature>
<dbReference type="EMBL" id="CP000409">
    <property type="protein sequence ID" value="ABV73045.1"/>
    <property type="molecule type" value="Genomic_DNA"/>
</dbReference>
<dbReference type="RefSeq" id="WP_012148246.1">
    <property type="nucleotide sequence ID" value="NC_009879.1"/>
</dbReference>
<dbReference type="SMR" id="A8EXG2"/>
<dbReference type="STRING" id="293613.A1E_00475"/>
<dbReference type="KEGG" id="rcm:A1E_00475"/>
<dbReference type="eggNOG" id="COG0227">
    <property type="taxonomic scope" value="Bacteria"/>
</dbReference>
<dbReference type="HOGENOM" id="CLU_064548_4_2_5"/>
<dbReference type="Proteomes" id="UP000007056">
    <property type="component" value="Chromosome"/>
</dbReference>
<dbReference type="GO" id="GO:1990904">
    <property type="term" value="C:ribonucleoprotein complex"/>
    <property type="evidence" value="ECO:0007669"/>
    <property type="project" value="UniProtKB-KW"/>
</dbReference>
<dbReference type="GO" id="GO:0005840">
    <property type="term" value="C:ribosome"/>
    <property type="evidence" value="ECO:0007669"/>
    <property type="project" value="UniProtKB-KW"/>
</dbReference>
<dbReference type="GO" id="GO:0003735">
    <property type="term" value="F:structural constituent of ribosome"/>
    <property type="evidence" value="ECO:0007669"/>
    <property type="project" value="InterPro"/>
</dbReference>
<dbReference type="GO" id="GO:0006412">
    <property type="term" value="P:translation"/>
    <property type="evidence" value="ECO:0007669"/>
    <property type="project" value="UniProtKB-UniRule"/>
</dbReference>
<dbReference type="Gene3D" id="2.30.170.40">
    <property type="entry name" value="Ribosomal protein L28/L24"/>
    <property type="match status" value="1"/>
</dbReference>
<dbReference type="HAMAP" id="MF_00373">
    <property type="entry name" value="Ribosomal_bL28"/>
    <property type="match status" value="1"/>
</dbReference>
<dbReference type="InterPro" id="IPR026569">
    <property type="entry name" value="Ribosomal_bL28"/>
</dbReference>
<dbReference type="InterPro" id="IPR034704">
    <property type="entry name" value="Ribosomal_bL28/bL31-like_sf"/>
</dbReference>
<dbReference type="InterPro" id="IPR001383">
    <property type="entry name" value="Ribosomal_bL28_bact-type"/>
</dbReference>
<dbReference type="InterPro" id="IPR037147">
    <property type="entry name" value="Ribosomal_bL28_sf"/>
</dbReference>
<dbReference type="NCBIfam" id="TIGR00009">
    <property type="entry name" value="L28"/>
    <property type="match status" value="1"/>
</dbReference>
<dbReference type="PANTHER" id="PTHR13528">
    <property type="entry name" value="39S RIBOSOMAL PROTEIN L28, MITOCHONDRIAL"/>
    <property type="match status" value="1"/>
</dbReference>
<dbReference type="PANTHER" id="PTHR13528:SF2">
    <property type="entry name" value="LARGE RIBOSOMAL SUBUNIT PROTEIN BL28M"/>
    <property type="match status" value="1"/>
</dbReference>
<dbReference type="Pfam" id="PF00830">
    <property type="entry name" value="Ribosomal_L28"/>
    <property type="match status" value="1"/>
</dbReference>
<dbReference type="SUPFAM" id="SSF143800">
    <property type="entry name" value="L28p-like"/>
    <property type="match status" value="1"/>
</dbReference>
<protein>
    <recommendedName>
        <fullName evidence="1">Large ribosomal subunit protein bL28</fullName>
    </recommendedName>
    <alternativeName>
        <fullName evidence="2">50S ribosomal protein L28</fullName>
    </alternativeName>
</protein>
<organism>
    <name type="scientific">Rickettsia canadensis (strain McKiel)</name>
    <dbReference type="NCBI Taxonomy" id="293613"/>
    <lineage>
        <taxon>Bacteria</taxon>
        <taxon>Pseudomonadati</taxon>
        <taxon>Pseudomonadota</taxon>
        <taxon>Alphaproteobacteria</taxon>
        <taxon>Rickettsiales</taxon>
        <taxon>Rickettsiaceae</taxon>
        <taxon>Rickettsieae</taxon>
        <taxon>Rickettsia</taxon>
        <taxon>belli group</taxon>
    </lineage>
</organism>
<keyword id="KW-0687">Ribonucleoprotein</keyword>
<keyword id="KW-0689">Ribosomal protein</keyword>
<sequence>MSRKCDLTGVGVLYGNNVSHSQRKTRRRFEPNLRSVKFKSDITSGAYRLLVNARCISSVEKAGGFDAYILKADDNVLSSAARAIKKKIIQTKTAKSL</sequence>
<name>RL28_RICCK</name>
<gene>
    <name evidence="1" type="primary">rpmB</name>
    <name type="ordered locus">A1E_00475</name>
</gene>